<gene>
    <name evidence="1" type="primary">rplU</name>
    <name type="ordered locus">Psyc_1573</name>
</gene>
<accession>Q4FRD7</accession>
<organism>
    <name type="scientific">Psychrobacter arcticus (strain DSM 17307 / VKM B-2377 / 273-4)</name>
    <dbReference type="NCBI Taxonomy" id="259536"/>
    <lineage>
        <taxon>Bacteria</taxon>
        <taxon>Pseudomonadati</taxon>
        <taxon>Pseudomonadota</taxon>
        <taxon>Gammaproteobacteria</taxon>
        <taxon>Moraxellales</taxon>
        <taxon>Moraxellaceae</taxon>
        <taxon>Psychrobacter</taxon>
    </lineage>
</organism>
<evidence type="ECO:0000255" key="1">
    <source>
        <dbReference type="HAMAP-Rule" id="MF_01363"/>
    </source>
</evidence>
<evidence type="ECO:0000305" key="2"/>
<sequence length="103" mass="11793">MYAVIKTGGKQHRVVVNELLKVELLKAETGETIKFEDVLMIVDGETVKIGQPIVEGASVEVEVVEHGRGEKIRIVKHNRRKHYHKEQGHRQWYTLLKIKAINA</sequence>
<reference key="1">
    <citation type="journal article" date="2010" name="Appl. Environ. Microbiol.">
        <title>The genome sequence of Psychrobacter arcticus 273-4, a psychroactive Siberian permafrost bacterium, reveals mechanisms for adaptation to low-temperature growth.</title>
        <authorList>
            <person name="Ayala-del-Rio H.L."/>
            <person name="Chain P.S."/>
            <person name="Grzymski J.J."/>
            <person name="Ponder M.A."/>
            <person name="Ivanova N."/>
            <person name="Bergholz P.W."/>
            <person name="Di Bartolo G."/>
            <person name="Hauser L."/>
            <person name="Land M."/>
            <person name="Bakermans C."/>
            <person name="Rodrigues D."/>
            <person name="Klappenbach J."/>
            <person name="Zarka D."/>
            <person name="Larimer F."/>
            <person name="Richardson P."/>
            <person name="Murray A."/>
            <person name="Thomashow M."/>
            <person name="Tiedje J.M."/>
        </authorList>
    </citation>
    <scope>NUCLEOTIDE SEQUENCE [LARGE SCALE GENOMIC DNA]</scope>
    <source>
        <strain>DSM 17307 / VKM B-2377 / 273-4</strain>
    </source>
</reference>
<dbReference type="EMBL" id="CP000082">
    <property type="protein sequence ID" value="AAZ19421.1"/>
    <property type="molecule type" value="Genomic_DNA"/>
</dbReference>
<dbReference type="RefSeq" id="WP_011280837.1">
    <property type="nucleotide sequence ID" value="NC_007204.1"/>
</dbReference>
<dbReference type="SMR" id="Q4FRD7"/>
<dbReference type="STRING" id="259536.Psyc_1573"/>
<dbReference type="KEGG" id="par:Psyc_1573"/>
<dbReference type="eggNOG" id="COG0261">
    <property type="taxonomic scope" value="Bacteria"/>
</dbReference>
<dbReference type="HOGENOM" id="CLU_061463_3_2_6"/>
<dbReference type="OrthoDB" id="9813334at2"/>
<dbReference type="Proteomes" id="UP000000546">
    <property type="component" value="Chromosome"/>
</dbReference>
<dbReference type="GO" id="GO:0005737">
    <property type="term" value="C:cytoplasm"/>
    <property type="evidence" value="ECO:0007669"/>
    <property type="project" value="UniProtKB-ARBA"/>
</dbReference>
<dbReference type="GO" id="GO:1990904">
    <property type="term" value="C:ribonucleoprotein complex"/>
    <property type="evidence" value="ECO:0007669"/>
    <property type="project" value="UniProtKB-KW"/>
</dbReference>
<dbReference type="GO" id="GO:0005840">
    <property type="term" value="C:ribosome"/>
    <property type="evidence" value="ECO:0007669"/>
    <property type="project" value="UniProtKB-KW"/>
</dbReference>
<dbReference type="GO" id="GO:0019843">
    <property type="term" value="F:rRNA binding"/>
    <property type="evidence" value="ECO:0007669"/>
    <property type="project" value="UniProtKB-UniRule"/>
</dbReference>
<dbReference type="GO" id="GO:0003735">
    <property type="term" value="F:structural constituent of ribosome"/>
    <property type="evidence" value="ECO:0007669"/>
    <property type="project" value="InterPro"/>
</dbReference>
<dbReference type="GO" id="GO:0006412">
    <property type="term" value="P:translation"/>
    <property type="evidence" value="ECO:0007669"/>
    <property type="project" value="UniProtKB-UniRule"/>
</dbReference>
<dbReference type="HAMAP" id="MF_01363">
    <property type="entry name" value="Ribosomal_bL21"/>
    <property type="match status" value="1"/>
</dbReference>
<dbReference type="InterPro" id="IPR028909">
    <property type="entry name" value="bL21-like"/>
</dbReference>
<dbReference type="InterPro" id="IPR036164">
    <property type="entry name" value="bL21-like_sf"/>
</dbReference>
<dbReference type="InterPro" id="IPR001787">
    <property type="entry name" value="Ribosomal_bL21"/>
</dbReference>
<dbReference type="InterPro" id="IPR018258">
    <property type="entry name" value="Ribosomal_bL21_CS"/>
</dbReference>
<dbReference type="NCBIfam" id="TIGR00061">
    <property type="entry name" value="L21"/>
    <property type="match status" value="1"/>
</dbReference>
<dbReference type="PANTHER" id="PTHR21349">
    <property type="entry name" value="50S RIBOSOMAL PROTEIN L21"/>
    <property type="match status" value="1"/>
</dbReference>
<dbReference type="PANTHER" id="PTHR21349:SF0">
    <property type="entry name" value="LARGE RIBOSOMAL SUBUNIT PROTEIN BL21M"/>
    <property type="match status" value="1"/>
</dbReference>
<dbReference type="Pfam" id="PF00829">
    <property type="entry name" value="Ribosomal_L21p"/>
    <property type="match status" value="1"/>
</dbReference>
<dbReference type="SUPFAM" id="SSF141091">
    <property type="entry name" value="L21p-like"/>
    <property type="match status" value="1"/>
</dbReference>
<dbReference type="PROSITE" id="PS01169">
    <property type="entry name" value="RIBOSOMAL_L21"/>
    <property type="match status" value="1"/>
</dbReference>
<feature type="chain" id="PRO_0000269366" description="Large ribosomal subunit protein bL21">
    <location>
        <begin position="1"/>
        <end position="103"/>
    </location>
</feature>
<comment type="function">
    <text evidence="1">This protein binds to 23S rRNA in the presence of protein L20.</text>
</comment>
<comment type="subunit">
    <text evidence="1">Part of the 50S ribosomal subunit. Contacts protein L20.</text>
</comment>
<comment type="similarity">
    <text evidence="1">Belongs to the bacterial ribosomal protein bL21 family.</text>
</comment>
<keyword id="KW-1185">Reference proteome</keyword>
<keyword id="KW-0687">Ribonucleoprotein</keyword>
<keyword id="KW-0689">Ribosomal protein</keyword>
<keyword id="KW-0694">RNA-binding</keyword>
<keyword id="KW-0699">rRNA-binding</keyword>
<protein>
    <recommendedName>
        <fullName evidence="1">Large ribosomal subunit protein bL21</fullName>
    </recommendedName>
    <alternativeName>
        <fullName evidence="2">50S ribosomal protein L21</fullName>
    </alternativeName>
</protein>
<proteinExistence type="inferred from homology"/>
<name>RL21_PSYA2</name>